<comment type="subcellular location">
    <subcellularLocation>
        <location evidence="1">Nucleus</location>
    </subcellularLocation>
</comment>
<comment type="similarity">
    <text evidence="3">Belongs to the even-skipped homeobox family.</text>
</comment>
<dbReference type="EMBL" id="AF224263">
    <property type="protein sequence ID" value="AAF44638.1"/>
    <property type="molecule type" value="Genomic_DNA"/>
</dbReference>
<dbReference type="SMR" id="Q9IA18"/>
<dbReference type="GO" id="GO:0005634">
    <property type="term" value="C:nucleus"/>
    <property type="evidence" value="ECO:0007669"/>
    <property type="project" value="UniProtKB-SubCell"/>
</dbReference>
<dbReference type="GO" id="GO:0000981">
    <property type="term" value="F:DNA-binding transcription factor activity, RNA polymerase II-specific"/>
    <property type="evidence" value="ECO:0007669"/>
    <property type="project" value="InterPro"/>
</dbReference>
<dbReference type="GO" id="GO:0000978">
    <property type="term" value="F:RNA polymerase II cis-regulatory region sequence-specific DNA binding"/>
    <property type="evidence" value="ECO:0007669"/>
    <property type="project" value="TreeGrafter"/>
</dbReference>
<dbReference type="CDD" id="cd00086">
    <property type="entry name" value="homeodomain"/>
    <property type="match status" value="1"/>
</dbReference>
<dbReference type="FunFam" id="1.10.10.60:FF:000367">
    <property type="entry name" value="homeobox even-skipped homolog protein 2"/>
    <property type="match status" value="1"/>
</dbReference>
<dbReference type="Gene3D" id="1.10.10.60">
    <property type="entry name" value="Homeodomain-like"/>
    <property type="match status" value="1"/>
</dbReference>
<dbReference type="InterPro" id="IPR052002">
    <property type="entry name" value="Even-skipped_HD"/>
</dbReference>
<dbReference type="InterPro" id="IPR001356">
    <property type="entry name" value="HD"/>
</dbReference>
<dbReference type="InterPro" id="IPR020479">
    <property type="entry name" value="HD_metazoa"/>
</dbReference>
<dbReference type="InterPro" id="IPR017970">
    <property type="entry name" value="Homeobox_CS"/>
</dbReference>
<dbReference type="InterPro" id="IPR009057">
    <property type="entry name" value="Homeodomain-like_sf"/>
</dbReference>
<dbReference type="PANTHER" id="PTHR46294:SF1">
    <property type="entry name" value="HOMEOBOX EVEN-SKIPPED HOMOLOG PROTEIN 2"/>
    <property type="match status" value="1"/>
</dbReference>
<dbReference type="PANTHER" id="PTHR46294">
    <property type="entry name" value="SEGMENTATION PROTEIN EVEN-SKIPPED"/>
    <property type="match status" value="1"/>
</dbReference>
<dbReference type="Pfam" id="PF00046">
    <property type="entry name" value="Homeodomain"/>
    <property type="match status" value="1"/>
</dbReference>
<dbReference type="PRINTS" id="PR00024">
    <property type="entry name" value="HOMEOBOX"/>
</dbReference>
<dbReference type="SMART" id="SM00389">
    <property type="entry name" value="HOX"/>
    <property type="match status" value="1"/>
</dbReference>
<dbReference type="SUPFAM" id="SSF46689">
    <property type="entry name" value="Homeodomain-like"/>
    <property type="match status" value="1"/>
</dbReference>
<dbReference type="PROSITE" id="PS00027">
    <property type="entry name" value="HOMEOBOX_1"/>
    <property type="match status" value="1"/>
</dbReference>
<dbReference type="PROSITE" id="PS50071">
    <property type="entry name" value="HOMEOBOX_2"/>
    <property type="match status" value="1"/>
</dbReference>
<proteinExistence type="inferred from homology"/>
<protein>
    <recommendedName>
        <fullName>Homeobox even-skipped homolog protein 2</fullName>
    </recommendedName>
    <alternativeName>
        <fullName>EVX-2</fullName>
    </alternativeName>
</protein>
<accession>Q9IA18</accession>
<gene>
    <name type="primary">EVX2</name>
</gene>
<sequence length="424" mass="45629">MERIRKEIILMERGLHSPAGKKVSNLSDSAGNAVEEALENSHHSGRLSPRPTSASLHNTVGDTPTNGKFEIDNLFHHQHSSDSTSSSEISSLETRKKFSLYSELACREKEADMNSDVDVGCSTLRSPAGVSTTQLKENTNKVYSDNGSSTNTSSNGSNITNLNGNSSSIGNSGSGPDQVRRYRTAFTREQIGRLEKEFYRENYVSRPRRCELAAALNLPETTIKVWFQNRRMKDKRQRLAMSWPHPADPSFYTYMMTHAAATGSLPYPFHSHVPLHYYPHVGVTAAAAAAAATGATPFPTSIRPLDTFRALSHPYSRPELLCSFRHPGLYQSPHGLNSSAATAAAAAAAAAAASTPAGTAPCSCLSCHSNQSGALGPRSASSDFTCTATAQRSESSFLPYSAAVLSKSAAVSPPDQREESSLTR</sequence>
<feature type="chain" id="PRO_0000048874" description="Homeobox even-skipped homolog protein 2">
    <location>
        <begin position="1"/>
        <end position="424"/>
    </location>
</feature>
<feature type="DNA-binding region" description="Homeobox" evidence="1">
    <location>
        <begin position="179"/>
        <end position="238"/>
    </location>
</feature>
<feature type="region of interest" description="Disordered" evidence="2">
    <location>
        <begin position="18"/>
        <end position="65"/>
    </location>
</feature>
<feature type="region of interest" description="Disordered" evidence="2">
    <location>
        <begin position="132"/>
        <end position="178"/>
    </location>
</feature>
<feature type="compositionally biased region" description="Polar residues" evidence="2">
    <location>
        <begin position="50"/>
        <end position="65"/>
    </location>
</feature>
<feature type="compositionally biased region" description="Polar residues" evidence="2">
    <location>
        <begin position="132"/>
        <end position="145"/>
    </location>
</feature>
<feature type="compositionally biased region" description="Low complexity" evidence="2">
    <location>
        <begin position="146"/>
        <end position="175"/>
    </location>
</feature>
<keyword id="KW-0217">Developmental protein</keyword>
<keyword id="KW-0238">DNA-binding</keyword>
<keyword id="KW-0371">Homeobox</keyword>
<keyword id="KW-0539">Nucleus</keyword>
<evidence type="ECO:0000255" key="1">
    <source>
        <dbReference type="PROSITE-ProRule" id="PRU00108"/>
    </source>
</evidence>
<evidence type="ECO:0000256" key="2">
    <source>
        <dbReference type="SAM" id="MobiDB-lite"/>
    </source>
</evidence>
<evidence type="ECO:0000305" key="3"/>
<reference key="1">
    <citation type="journal article" date="2000" name="Proc. Natl. Acad. Sci. U.S.A.">
        <title>Hox cluster genomics in the horn shark, Heterodontus francisci.</title>
        <authorList>
            <person name="Kim C.B."/>
            <person name="Amemiya C."/>
            <person name="Bailey W."/>
            <person name="Kawasaki K."/>
            <person name="Mezey J."/>
            <person name="Miller W."/>
            <person name="Minoshima S."/>
            <person name="Shimizu N."/>
            <person name="Wagner G."/>
            <person name="Ruddle F."/>
        </authorList>
    </citation>
    <scope>NUCLEOTIDE SEQUENCE [GENOMIC DNA]</scope>
</reference>
<organism>
    <name type="scientific">Heterodontus francisci</name>
    <name type="common">Horn shark</name>
    <name type="synonym">Cestracion francisci</name>
    <dbReference type="NCBI Taxonomy" id="7792"/>
    <lineage>
        <taxon>Eukaryota</taxon>
        <taxon>Metazoa</taxon>
        <taxon>Chordata</taxon>
        <taxon>Craniata</taxon>
        <taxon>Vertebrata</taxon>
        <taxon>Chondrichthyes</taxon>
        <taxon>Elasmobranchii</taxon>
        <taxon>Galeomorphii</taxon>
        <taxon>Heterodontoidea</taxon>
        <taxon>Heterodontiformes</taxon>
        <taxon>Heterodontidae</taxon>
        <taxon>Heterodontus</taxon>
    </lineage>
</organism>
<name>EVX2_HETFR</name>